<comment type="function">
    <text evidence="1 2 3 4 5 6 7 8 9 10 11 12 13 17 18">Tryptophan dimethylallyltransferase; part of the gene cluster that mediates the biosynthesis of fungal ergot alkaloid (PubMed:10071219, PubMed:14700635, PubMed:14732265, PubMed:15904941, PubMed:17308187, PubMed:17720822). DmaW catalyzes the first step of ergot alkaloid biosynthesis by condensing dimethylallyl diphosphate (DMAP) and tryptophan to form 4-dimethylallyl-L-tryptophan (PubMed:14732265). The second step is catalyzed by the methyltransferase easF that methylates 4-dimethylallyl-L-tryptophan in the presence of S-adenosyl-L-methionine, resulting in the formation of 4-dimethylallyl-L-abrine (By similarity). The catalase easC and the FAD-dependent oxidoreductase easE then transform 4-dimethylallyl-L-abrine to chanoclavine-I which is further oxidized by easD in the presence of NAD(+), resulting in the formation of chanoclavine-I aldehyde (PubMed:20118373, PubMed:21409592). Agroclavine dehydrogenase easG then mediates the conversion of chanoclavine-I aldehyde to agroclavine via a non-enzymatic adduct reaction: the substrate is an iminium intermediate that is formed spontaneously from chanoclavine-I aldehyde in the presence of glutathione (PubMed:20735127, PubMed:21494745). The presence of easA is not required to complete this reaction (PubMed:21494745). Further conversion of agroclavine to paspalic acid is a two-step process involving oxidation of agroclavine to elymoclavine and of elymoclavine to paspalic acid, the second step being performed by the elymoclavine oxidase cloA (PubMed:16538694, PubMed:17720822). Paspalic acid is then further converted to D-lysergic acid (PubMed:15904941). Ergopeptines are assembled from D-lysergic acid and three different amino acids by the D-lysergyl-peptide-synthetases composed each of a monomudular and a trimodular nonribosomal peptide synthetase subunit (PubMed:14700635, PubMed:15904941). LpsB and lpsC encode the monomodular subunits responsible for D-lysergic acid activation and incorporation into the ergopeptine backbone (PubMed:14700635). LpsA1 and A2 subunits encode the trimodular nonribosomal peptide synthetase assembling the tripeptide portion of ergopeptines (PubMed:14700635). LpsA1 is responsible for formation of the major ergopeptine, ergotamine, and lpsA2 for alpha-ergocryptine, the minor ergopeptine of the total alkaloid mixture elaborated by C.purpurea (PubMed:17560817, PubMed:19139103). D-lysergyl-tripeptides are assembled by the nonribosomal peptide synthetases and released as N-(D-lysergyl-aminoacyl)-lactams (PubMed:24361048). Cyclolization of the D-lysergyl-tripeptides is performed by the Fe(2+)/2-ketoglutarate-dependent dioxygenase easH which introduces a hydroxyl group into N-(D-lysergyl-aminoacyl)-lactam at alpha-C of the aminoacyl residue followed by spontaneous condensation with the terminal lactam carbonyl group (PubMed:24361048).</text>
</comment>
<comment type="catalytic activity">
    <reaction evidence="4">
        <text>L-tryptophan + dimethylallyl diphosphate = 4-(3-methylbut-2-enyl)-L-tryptophan + diphosphate</text>
        <dbReference type="Rhea" id="RHEA:14173"/>
        <dbReference type="ChEBI" id="CHEBI:33019"/>
        <dbReference type="ChEBI" id="CHEBI:57623"/>
        <dbReference type="ChEBI" id="CHEBI:57912"/>
        <dbReference type="ChEBI" id="CHEBI:58209"/>
        <dbReference type="EC" id="2.5.1.34"/>
    </reaction>
</comment>
<comment type="pathway">
    <text evidence="4">Alkaloid biosynthesis; ergot alkaloid biosynthesis.</text>
</comment>
<comment type="subunit">
    <text evidence="1">Homodimer.</text>
</comment>
<comment type="similarity">
    <text evidence="16">Belongs to the tryptophan dimethylallyltransferase family.</text>
</comment>
<comment type="sequence caution" evidence="16">
    <conflict type="erroneous gene model prediction">
        <sequence resource="EMBL-CDS" id="CAC37397"/>
    </conflict>
</comment>
<evidence type="ECO:0000250" key="1">
    <source>
        <dbReference type="UniProtKB" id="Q50EL0"/>
    </source>
</evidence>
<evidence type="ECO:0000269" key="2">
    <source>
    </source>
</evidence>
<evidence type="ECO:0000269" key="3">
    <source>
    </source>
</evidence>
<evidence type="ECO:0000269" key="4">
    <source>
    </source>
</evidence>
<evidence type="ECO:0000269" key="5">
    <source>
    </source>
</evidence>
<evidence type="ECO:0000269" key="6">
    <source>
    </source>
</evidence>
<evidence type="ECO:0000269" key="7">
    <source>
    </source>
</evidence>
<evidence type="ECO:0000269" key="8">
    <source>
    </source>
</evidence>
<evidence type="ECO:0000269" key="9">
    <source>
    </source>
</evidence>
<evidence type="ECO:0000269" key="10">
    <source>
    </source>
</evidence>
<evidence type="ECO:0000269" key="11">
    <source>
    </source>
</evidence>
<evidence type="ECO:0000269" key="12">
    <source>
    </source>
</evidence>
<evidence type="ECO:0000269" key="13">
    <source>
    </source>
</evidence>
<evidence type="ECO:0000303" key="14">
    <source>
    </source>
</evidence>
<evidence type="ECO:0000303" key="15">
    <source>
    </source>
</evidence>
<evidence type="ECO:0000305" key="16"/>
<evidence type="ECO:0000305" key="17">
    <source>
    </source>
</evidence>
<evidence type="ECO:0000305" key="18">
    <source>
    </source>
</evidence>
<reference key="1">
    <citation type="submission" date="2011-06" db="EMBL/GenBank/DDBJ databases">
        <authorList>
            <person name="Florea S."/>
            <person name="Oeser B."/>
            <person name="Tudzynski P."/>
            <person name="Schardl C.L."/>
        </authorList>
    </citation>
    <scope>NUCLEOTIDE SEQUENCE [GENOMIC DNA]</scope>
    <source>
        <strain>20.1</strain>
    </source>
</reference>
<reference key="2">
    <citation type="journal article" date="2013" name="PLoS Genet.">
        <title>Plant-symbiotic fungi as chemical engineers: Multi-genome analysis of the Clavicipitaceae reveals dynamics of alkaloid loci.</title>
        <authorList>
            <person name="Schardl C.L."/>
            <person name="Young C.A."/>
            <person name="Hesse U."/>
            <person name="Amyotte S.G."/>
            <person name="Andreeva K."/>
            <person name="Calie P.J."/>
            <person name="Fleetwood D.J."/>
            <person name="Haws D.C."/>
            <person name="Moore N."/>
            <person name="Oeser B."/>
            <person name="Panaccione D.G."/>
            <person name="Schweri K.K."/>
            <person name="Voisey C.R."/>
            <person name="Farman M.L."/>
            <person name="Jaromczyk J.W."/>
            <person name="Roe B.A."/>
            <person name="O'Sullivan D.M."/>
            <person name="Scott B."/>
            <person name="Tudzynski P."/>
            <person name="An Z."/>
            <person name="Arnaoudova E.G."/>
            <person name="Bullock C.T."/>
            <person name="Charlton N.D."/>
            <person name="Chen L."/>
            <person name="Cox M."/>
            <person name="Dinkins R.D."/>
            <person name="Florea S."/>
            <person name="Glenn A.E."/>
            <person name="Gordon A."/>
            <person name="Gueldener U."/>
            <person name="Harris D.R."/>
            <person name="Hollin W."/>
            <person name="Jaromczyk J."/>
            <person name="Johnson R.D."/>
            <person name="Khan A.K."/>
            <person name="Leistner E."/>
            <person name="Leuchtmann A."/>
            <person name="Li C."/>
            <person name="Liu J."/>
            <person name="Liu J."/>
            <person name="Liu M."/>
            <person name="Mace W."/>
            <person name="Machado C."/>
            <person name="Nagabhyru P."/>
            <person name="Pan J."/>
            <person name="Schmid J."/>
            <person name="Sugawara K."/>
            <person name="Steiner U."/>
            <person name="Takach J.E."/>
            <person name="Tanaka E."/>
            <person name="Webb J.S."/>
            <person name="Wilson E.V."/>
            <person name="Wiseman J.L."/>
            <person name="Yoshida R."/>
            <person name="Zeng Z."/>
        </authorList>
    </citation>
    <scope>NUCLEOTIDE SEQUENCE [LARGE SCALE GENOMIC DNA]</scope>
    <source>
        <strain>20.1</strain>
    </source>
</reference>
<reference key="3">
    <citation type="submission" date="2001-04" db="EMBL/GenBank/DDBJ databases">
        <title>Molecular analysis of dimethyl-allyl-tryptophan-synthase-genes.</title>
        <authorList>
            <person name="Correia T.H."/>
            <person name="Tudzynski P."/>
        </authorList>
    </citation>
    <scope>NUCLEOTIDE SEQUENCE [GENOMIC DNA] OF 1-441</scope>
    <source>
        <strain>T5</strain>
    </source>
</reference>
<reference key="4">
    <citation type="journal article" date="1999" name="Mol. Gen. Genet.">
        <title>Evidence for an ergot alkaloid gene cluster in Claviceps purpurea.</title>
        <authorList>
            <person name="Tudzynski P."/>
            <person name="Hoelter K."/>
            <person name="Correia T.H."/>
            <person name="Arntz C."/>
            <person name="Grammel N."/>
            <person name="Keller U."/>
        </authorList>
    </citation>
    <scope>IDENTIFICATION IN THE EAS CLUSTER</scope>
    <scope>FUNCTION</scope>
    <source>
        <strain>P1 / 1029/N5</strain>
    </source>
</reference>
<reference key="5">
    <citation type="journal article" date="2001" name="Appl. Microbiol. Biotechnol.">
        <title>Biotechnology and genetics of ergot alkaloids.</title>
        <authorList>
            <person name="Tudzynski P."/>
            <person name="Correia T."/>
            <person name="Keller U."/>
        </authorList>
    </citation>
    <scope>BIOTECHNOLOGY</scope>
    <source>
        <strain>P1 / 1029/N5</strain>
    </source>
</reference>
<reference key="6">
    <citation type="journal article" date="2003" name="Chem. Biol.">
        <title>Molecular cloning and analysis of the ergopeptine assembly system in the ergot fungus Claviceps purpurea.</title>
        <authorList>
            <person name="Correia T."/>
            <person name="Grammel N."/>
            <person name="Ortel I."/>
            <person name="Keller U."/>
            <person name="Tudzynski P."/>
        </authorList>
    </citation>
    <scope>FUNCTION</scope>
</reference>
<reference key="7">
    <citation type="journal article" date="2004" name="Fungal Genet. Biol.">
        <title>The determinant step in ergot alkaloid biosynthesis by an endophyte of perennial ryegrass.</title>
        <authorList>
            <person name="Wang J."/>
            <person name="Machado C."/>
            <person name="Panaccione D.G."/>
            <person name="Tsai H.-F."/>
            <person name="Schardl C.L."/>
        </authorList>
    </citation>
    <scope>FUNCTION</scope>
    <scope>CATALYTIC ACTIVITY</scope>
    <scope>PATHWAY</scope>
    <source>
        <strain>ATCC 20102 / Farmitalia FI 32/17</strain>
    </source>
</reference>
<reference key="8">
    <citation type="journal article" date="2005" name="Phytochemistry">
        <title>The ergot alkaloid gene cluster in Claviceps purpurea: extension of the cluster sequence and intra species evolution.</title>
        <authorList>
            <person name="Haarmann T."/>
            <person name="Machado C."/>
            <person name="Lubbe Y."/>
            <person name="Correia T."/>
            <person name="Schardl C.L."/>
            <person name="Panaccione D.G."/>
            <person name="Tudzynski P."/>
        </authorList>
    </citation>
    <scope>FUNCTION</scope>
    <scope>IDENTIFICATION IN THE EAS CLUSTER</scope>
</reference>
<reference key="9">
    <citation type="journal article" date="2006" name="ChemBioChem">
        <title>Identification of the cytochrome P450 monooxygenase that bridges the clavine and ergoline alkaloid pathways.</title>
        <authorList>
            <person name="Haarmann T."/>
            <person name="Ortel I."/>
            <person name="Tudzynski P."/>
            <person name="Keller U."/>
        </authorList>
    </citation>
    <scope>FUNCTION</scope>
    <source>
        <strain>P1 / 1029/N5</strain>
    </source>
</reference>
<reference key="10">
    <citation type="journal article" date="2007" name="Appl. Environ. Microbiol.">
        <title>A complex ergovaline gene cluster in epichloe endophytes of grasses.</title>
        <authorList>
            <person name="Fleetwood D.J."/>
            <person name="Scott B."/>
            <person name="Lane G.A."/>
            <person name="Tanaka A."/>
            <person name="Johnson R.D."/>
        </authorList>
    </citation>
    <scope>FUNCTION</scope>
</reference>
<reference key="11">
    <citation type="journal article" date="2007" name="Appl. Environ. Microbiol.">
        <title>Comparison of ergot alkaloid biosynthesis gene clusters in Claviceps species indicates loss of late pathway steps in evolution of C. fusiformis.</title>
        <authorList>
            <person name="Lorenz N."/>
            <person name="Wilson E.V."/>
            <person name="Machado C."/>
            <person name="Schardl C.L."/>
            <person name="Tudzynski P."/>
        </authorList>
    </citation>
    <scope>FUNCTION</scope>
</reference>
<reference key="12">
    <citation type="journal article" date="2008" name="Fungal Genet. Biol.">
        <title>Use of a nonhomologous end joining deficient strain (Deltaku70) of the ergot fungus Claviceps purpurea for identification of a nonribosomal peptide synthetase gene involved in ergotamine biosynthesis.</title>
        <authorList>
            <person name="Haarmann T."/>
            <person name="Lorenz N."/>
            <person name="Tudzynski P."/>
        </authorList>
    </citation>
    <scope>FUNCTION</scope>
</reference>
<reference key="13">
    <citation type="journal article" date="2009" name="J. Biol. Chem.">
        <title>Combinatorial assembly of simple and complex D-lysergic acid alkaloid peptide classes in the ergot fungus Claviceps purpurea.</title>
        <authorList>
            <person name="Ortel I."/>
            <person name="Keller U."/>
        </authorList>
    </citation>
    <scope>FUNCTION</scope>
</reference>
<reference key="14">
    <citation type="journal article" date="2010" name="Appl. Environ. Microbiol.">
        <title>Alkaloid cluster gene ccsA of the ergot fungus Claviceps purpurea encodes chanoclavine I synthase, a flavin adenine dinucleotide-containing oxidoreductase mediating the transformation of N-methyl-dimethylallyltryptophan to chanoclavine I.</title>
        <authorList>
            <person name="Lorenz N."/>
            <person name="Olsovska J."/>
            <person name="Sulc M."/>
            <person name="Tudzynski P."/>
        </authorList>
    </citation>
    <scope>FUNCTION</scope>
</reference>
<reference key="15">
    <citation type="journal article" date="2010" name="J. Am. Chem. Soc.">
        <title>Controlling a structural branch point in ergot alkaloid biosynthesis.</title>
        <authorList>
            <person name="Cheng J.Z."/>
            <person name="Coyle C.M."/>
            <person name="Panaccione D.G."/>
            <person name="O'Connor S.E."/>
        </authorList>
    </citation>
    <scope>FUNCTION</scope>
    <source>
        <strain>ATCC 20102 / Farmitalia FI 32/17</strain>
    </source>
</reference>
<reference key="16">
    <citation type="journal article" date="2011" name="Curr. Genet.">
        <title>Ergot cluster-encoded catalase is required for synthesis of chanoclavine-I in Aspergillus fumigatus.</title>
        <authorList>
            <person name="Goetz K.E."/>
            <person name="Coyle C.M."/>
            <person name="Cheng J.Z."/>
            <person name="O'Connor S.E."/>
            <person name="Panaccione D.G."/>
        </authorList>
    </citation>
    <scope>FUNCTION</scope>
</reference>
<reference key="17">
    <citation type="journal article" date="2011" name="Org. Biomol. Chem.">
        <title>New insights into ergot alkaloid biosynthesis in Claviceps purpurea: an agroclavine synthase EasG catalyses, via a non-enzymatic adduct with reduced glutathione, the conversion of chanoclavine-I aldehyde to agroclavine.</title>
        <authorList>
            <person name="Matuschek M."/>
            <person name="Wallwey C."/>
            <person name="Xie X."/>
            <person name="Li S.M."/>
        </authorList>
    </citation>
    <scope>FUNCTION</scope>
</reference>
<reference key="18">
    <citation type="journal article" date="2014" name="Chem. Biol.">
        <title>Cyclolization of D-lysergic acid alkaloid peptides.</title>
        <authorList>
            <person name="Havemann J."/>
            <person name="Vogel D."/>
            <person name="Loll B."/>
            <person name="Keller U."/>
        </authorList>
    </citation>
    <scope>FUNCTION</scope>
</reference>
<accession>M1WA41</accession>
<accession>G8GV68</accession>
<accession>O94204</accession>
<accession>Q6X2E0</accession>
<accession>Q9C140</accession>
<gene>
    <name evidence="15" type="primary">dmaW</name>
    <name evidence="14" type="synonym">cpd1</name>
    <name type="synonym">dmaW1</name>
    <name type="ORF">CPUR_04076</name>
</gene>
<keyword id="KW-0017">Alkaloid metabolism</keyword>
<keyword id="KW-1185">Reference proteome</keyword>
<keyword id="KW-0808">Transferase</keyword>
<sequence>MSTAKDPGNGVYEILSLIFDFPSNEQRLWWHSTAPMFAAMLDNAGYNIHDQYRHLGIFKKHIIPFLGVYPTKDKERWLSILTRCGLPLELSLNCTDSVVRYTYEPINEVTGTEKDPFNTLAIMASVQKLAQIQAGIDLEWFSYFKDELTLDESESATLQSNELVKEQIKTQNKLALDLKESQFALKVYFYPHLKSIATGKSTHDLIFDSVFKLSQKHDSIQPAFQVLCDYVSRRNHSAESDQHIALHARLLSCDLIDPAKSRVKIYLLEKTVSLSVMEDLWTLGGQRVDASTMDGLDMLRELWSLLKVPTGHLEYPKGYLELGEIPNEQLPSMANYTLHHNNPMPEPQVYFTVFGMNDAEISNALTIFFQRHGFDDMAKKYRVFLQDSYPYHDFESLNYLHAYISFSYRRNKPYLSVYLHTFETGRWPVVADSPISFDAYRRCDLSTK</sequence>
<feature type="chain" id="PRO_0000423495" description="Tryptophan dimethylallyltransferase 1">
    <location>
        <begin position="1"/>
        <end position="448"/>
    </location>
</feature>
<feature type="binding site" evidence="1">
    <location>
        <begin position="80"/>
        <end position="81"/>
    </location>
    <ligand>
        <name>L-tryptophan</name>
        <dbReference type="ChEBI" id="CHEBI:57912"/>
    </ligand>
</feature>
<feature type="binding site" evidence="1">
    <location>
        <position position="89"/>
    </location>
    <ligand>
        <name>L-tryptophan</name>
        <dbReference type="ChEBI" id="CHEBI:57912"/>
    </ligand>
</feature>
<feature type="binding site" evidence="1">
    <location>
        <position position="100"/>
    </location>
    <ligand>
        <name>substrate</name>
    </ligand>
</feature>
<feature type="binding site" evidence="1">
    <location>
        <position position="186"/>
    </location>
    <ligand>
        <name>substrate</name>
    </ligand>
</feature>
<feature type="binding site" evidence="1">
    <location>
        <position position="188"/>
    </location>
    <ligand>
        <name>substrate</name>
    </ligand>
</feature>
<feature type="binding site" evidence="1">
    <location>
        <position position="190"/>
    </location>
    <ligand>
        <name>L-tryptophan</name>
        <dbReference type="ChEBI" id="CHEBI:57912"/>
    </ligand>
</feature>
<feature type="binding site" evidence="1">
    <location>
        <position position="249"/>
    </location>
    <ligand>
        <name>L-tryptophan</name>
        <dbReference type="ChEBI" id="CHEBI:57912"/>
    </ligand>
</feature>
<feature type="binding site" evidence="1">
    <location>
        <position position="262"/>
    </location>
    <ligand>
        <name>substrate</name>
    </ligand>
</feature>
<feature type="binding site" evidence="1">
    <location>
        <position position="264"/>
    </location>
    <ligand>
        <name>substrate</name>
    </ligand>
</feature>
<feature type="binding site" evidence="1">
    <location>
        <position position="266"/>
    </location>
    <ligand>
        <name>substrate</name>
    </ligand>
</feature>
<feature type="binding site" evidence="1">
    <location>
        <position position="348"/>
    </location>
    <ligand>
        <name>substrate</name>
    </ligand>
</feature>
<feature type="binding site" evidence="1">
    <location>
        <position position="350"/>
    </location>
    <ligand>
        <name>substrate</name>
    </ligand>
</feature>
<feature type="binding site" evidence="1">
    <location>
        <position position="414"/>
    </location>
    <ligand>
        <name>substrate</name>
    </ligand>
</feature>
<feature type="binding site" evidence="1">
    <location>
        <position position="418"/>
    </location>
    <ligand>
        <name>substrate</name>
    </ligand>
</feature>
<dbReference type="EC" id="2.5.1.34" evidence="4"/>
<dbReference type="EMBL" id="JN186799">
    <property type="protein sequence ID" value="AET79188.1"/>
    <property type="molecule type" value="Genomic_DNA"/>
</dbReference>
<dbReference type="EMBL" id="CAGA01000020">
    <property type="protein sequence ID" value="CCE30228.1"/>
    <property type="molecule type" value="Genomic_DNA"/>
</dbReference>
<dbReference type="EMBL" id="AJ312754">
    <property type="protein sequence ID" value="CAC37397.1"/>
    <property type="status" value="ALT_SEQ"/>
    <property type="molecule type" value="Genomic_DNA"/>
</dbReference>
<dbReference type="SMR" id="M1WA41"/>
<dbReference type="STRING" id="1111077.M1WA41"/>
<dbReference type="VEuPathDB" id="FungiDB:CPUR_04076"/>
<dbReference type="eggNOG" id="ENOG502S2XP">
    <property type="taxonomic scope" value="Eukaryota"/>
</dbReference>
<dbReference type="HOGENOM" id="CLU_037431_0_0_1"/>
<dbReference type="OrthoDB" id="5392033at2759"/>
<dbReference type="BRENDA" id="2.5.1.34">
    <property type="organism ID" value="1445"/>
</dbReference>
<dbReference type="UniPathway" id="UPA00327"/>
<dbReference type="Proteomes" id="UP000016801">
    <property type="component" value="Unassembled WGS sequence"/>
</dbReference>
<dbReference type="GO" id="GO:0050364">
    <property type="term" value="F:tryptophan dimethylallyltransferase activity"/>
    <property type="evidence" value="ECO:0007669"/>
    <property type="project" value="UniProtKB-EC"/>
</dbReference>
<dbReference type="GO" id="GO:0035837">
    <property type="term" value="P:ergot alkaloid biosynthetic process"/>
    <property type="evidence" value="ECO:0007669"/>
    <property type="project" value="InterPro"/>
</dbReference>
<dbReference type="CDD" id="cd13929">
    <property type="entry name" value="PT-DMATS_CymD"/>
    <property type="match status" value="1"/>
</dbReference>
<dbReference type="InterPro" id="IPR033964">
    <property type="entry name" value="Aro_prenylTrfase"/>
</dbReference>
<dbReference type="InterPro" id="IPR017795">
    <property type="entry name" value="Aro_prenylTrfase_DMATS"/>
</dbReference>
<dbReference type="InterPro" id="IPR012148">
    <property type="entry name" value="DMATS-type_fun"/>
</dbReference>
<dbReference type="InterPro" id="IPR017796">
    <property type="entry name" value="Trp_dimethylallylTrfase"/>
</dbReference>
<dbReference type="NCBIfam" id="TIGR03429">
    <property type="entry name" value="arom_pren_DMATS"/>
    <property type="match status" value="1"/>
</dbReference>
<dbReference type="NCBIfam" id="TIGR03430">
    <property type="entry name" value="trp_dimet_allyl"/>
    <property type="match status" value="1"/>
</dbReference>
<dbReference type="PANTHER" id="PTHR40627">
    <property type="entry name" value="INDOLE PRENYLTRANSFERASE TDIB-RELATED"/>
    <property type="match status" value="1"/>
</dbReference>
<dbReference type="PANTHER" id="PTHR40627:SF3">
    <property type="entry name" value="PRENYLTRANSFERASE ASQH2-RELATED"/>
    <property type="match status" value="1"/>
</dbReference>
<dbReference type="Pfam" id="PF11991">
    <property type="entry name" value="Trp_DMAT"/>
    <property type="match status" value="1"/>
</dbReference>
<dbReference type="PIRSF" id="PIRSF000509">
    <property type="entry name" value="Trp_DMAT"/>
    <property type="match status" value="1"/>
</dbReference>
<dbReference type="SFLD" id="SFLDS00036">
    <property type="entry name" value="Aromatic_Prenyltransferase"/>
    <property type="match status" value="1"/>
</dbReference>
<dbReference type="SFLD" id="SFLDG01162">
    <property type="entry name" value="I"/>
    <property type="match status" value="1"/>
</dbReference>
<organism>
    <name type="scientific">Claviceps purpurea (strain 20.1)</name>
    <name type="common">Ergot fungus</name>
    <name type="synonym">Sphacelia segetum</name>
    <dbReference type="NCBI Taxonomy" id="1111077"/>
    <lineage>
        <taxon>Eukaryota</taxon>
        <taxon>Fungi</taxon>
        <taxon>Dikarya</taxon>
        <taxon>Ascomycota</taxon>
        <taxon>Pezizomycotina</taxon>
        <taxon>Sordariomycetes</taxon>
        <taxon>Hypocreomycetidae</taxon>
        <taxon>Hypocreales</taxon>
        <taxon>Clavicipitaceae</taxon>
        <taxon>Claviceps</taxon>
    </lineage>
</organism>
<protein>
    <recommendedName>
        <fullName evidence="16">Tryptophan dimethylallyltransferase 1</fullName>
        <ecNumber evidence="4">2.5.1.34</ecNumber>
    </recommendedName>
    <alternativeName>
        <fullName evidence="14">4-dimethylallyltryptophan synthase 1</fullName>
        <shortName evidence="14">DMATS 1</shortName>
    </alternativeName>
    <alternativeName>
        <fullName evidence="16">All-trans-hexaprenyl-diphosphate synthase 1</fullName>
    </alternativeName>
    <alternativeName>
        <fullName evidence="16">L-tryptophan dimethylallyl transferase 1</fullName>
    </alternativeName>
</protein>
<name>DMAW_CLAP2</name>
<proteinExistence type="evidence at protein level"/>